<feature type="chain" id="PRO_0000106779" description="Probable metallo-hydrolase MJ0296">
    <location>
        <begin position="1"/>
        <end position="203"/>
    </location>
</feature>
<feature type="binding site" evidence="1">
    <location>
        <position position="86"/>
    </location>
    <ligand>
        <name>Zn(2+)</name>
        <dbReference type="ChEBI" id="CHEBI:29105"/>
        <label>1</label>
    </ligand>
</feature>
<feature type="binding site" evidence="1">
    <location>
        <position position="88"/>
    </location>
    <ligand>
        <name>Zn(2+)</name>
        <dbReference type="ChEBI" id="CHEBI:29105"/>
        <label>1</label>
    </ligand>
</feature>
<feature type="binding site" evidence="1">
    <location>
        <position position="90"/>
    </location>
    <ligand>
        <name>Zn(2+)</name>
        <dbReference type="ChEBI" id="CHEBI:29105"/>
        <label>2</label>
    </ligand>
</feature>
<feature type="binding site" evidence="1">
    <location>
        <position position="91"/>
    </location>
    <ligand>
        <name>Zn(2+)</name>
        <dbReference type="ChEBI" id="CHEBI:29105"/>
        <label>2</label>
    </ligand>
</feature>
<feature type="binding site" evidence="1">
    <location>
        <position position="135"/>
    </location>
    <ligand>
        <name>Zn(2+)</name>
        <dbReference type="ChEBI" id="CHEBI:29105"/>
        <label>1</label>
    </ligand>
</feature>
<feature type="binding site" evidence="1">
    <location>
        <position position="152"/>
    </location>
    <ligand>
        <name>Zn(2+)</name>
        <dbReference type="ChEBI" id="CHEBI:29105"/>
        <label>1</label>
    </ligand>
</feature>
<feature type="binding site" evidence="1">
    <location>
        <position position="152"/>
    </location>
    <ligand>
        <name>Zn(2+)</name>
        <dbReference type="ChEBI" id="CHEBI:29105"/>
        <label>2</label>
    </ligand>
</feature>
<feature type="binding site" evidence="1">
    <location>
        <position position="193"/>
    </location>
    <ligand>
        <name>Zn(2+)</name>
        <dbReference type="ChEBI" id="CHEBI:29105"/>
        <label>2</label>
    </ligand>
</feature>
<accession>Q57744</accession>
<gene>
    <name type="ordered locus">MJ0296</name>
</gene>
<dbReference type="EC" id="3.-.-.-"/>
<dbReference type="EMBL" id="L77117">
    <property type="protein sequence ID" value="AAB98284.1"/>
    <property type="molecule type" value="Genomic_DNA"/>
</dbReference>
<dbReference type="PIR" id="A64337">
    <property type="entry name" value="A64337"/>
</dbReference>
<dbReference type="SMR" id="Q57744"/>
<dbReference type="STRING" id="243232.MJ_0296"/>
<dbReference type="PaxDb" id="243232-MJ_0296"/>
<dbReference type="EnsemblBacteria" id="AAB98284">
    <property type="protein sequence ID" value="AAB98284"/>
    <property type="gene ID" value="MJ_0296"/>
</dbReference>
<dbReference type="KEGG" id="mja:MJ_0296"/>
<dbReference type="eggNOG" id="arCOG00504">
    <property type="taxonomic scope" value="Archaea"/>
</dbReference>
<dbReference type="HOGENOM" id="CLU_030571_2_6_2"/>
<dbReference type="InParanoid" id="Q57744"/>
<dbReference type="PhylomeDB" id="Q57744"/>
<dbReference type="Proteomes" id="UP000000805">
    <property type="component" value="Chromosome"/>
</dbReference>
<dbReference type="GO" id="GO:0016787">
    <property type="term" value="F:hydrolase activity"/>
    <property type="evidence" value="ECO:0007669"/>
    <property type="project" value="UniProtKB-KW"/>
</dbReference>
<dbReference type="GO" id="GO:0046872">
    <property type="term" value="F:metal ion binding"/>
    <property type="evidence" value="ECO:0007669"/>
    <property type="project" value="UniProtKB-KW"/>
</dbReference>
<dbReference type="CDD" id="cd07711">
    <property type="entry name" value="MBLAC1-like_MBL-fold"/>
    <property type="match status" value="1"/>
</dbReference>
<dbReference type="Gene3D" id="3.60.15.10">
    <property type="entry name" value="Ribonuclease Z/Hydroxyacylglutathione hydrolase-like"/>
    <property type="match status" value="2"/>
</dbReference>
<dbReference type="InterPro" id="IPR001279">
    <property type="entry name" value="Metallo-B-lactamas"/>
</dbReference>
<dbReference type="InterPro" id="IPR050855">
    <property type="entry name" value="NDM-1-like"/>
</dbReference>
<dbReference type="InterPro" id="IPR036866">
    <property type="entry name" value="RibonucZ/Hydroxyglut_hydro"/>
</dbReference>
<dbReference type="PANTHER" id="PTHR42951">
    <property type="entry name" value="METALLO-BETA-LACTAMASE DOMAIN-CONTAINING"/>
    <property type="match status" value="1"/>
</dbReference>
<dbReference type="PANTHER" id="PTHR42951:SF18">
    <property type="entry name" value="METALLO-HYDROLASE MJ0296-RELATED"/>
    <property type="match status" value="1"/>
</dbReference>
<dbReference type="Pfam" id="PF00753">
    <property type="entry name" value="Lactamase_B"/>
    <property type="match status" value="1"/>
</dbReference>
<dbReference type="SMART" id="SM00849">
    <property type="entry name" value="Lactamase_B"/>
    <property type="match status" value="1"/>
</dbReference>
<dbReference type="SUPFAM" id="SSF56281">
    <property type="entry name" value="Metallo-hydrolase/oxidoreductase"/>
    <property type="match status" value="1"/>
</dbReference>
<comment type="cofactor">
    <cofactor evidence="1">
        <name>Zn(2+)</name>
        <dbReference type="ChEBI" id="CHEBI:29105"/>
    </cofactor>
    <text evidence="1">Binds 2 Zn(2+) ions per subunit.</text>
</comment>
<comment type="similarity">
    <text evidence="2">Belongs to the metallo-beta-lactamase superfamily.</text>
</comment>
<reference key="1">
    <citation type="journal article" date="1996" name="Science">
        <title>Complete genome sequence of the methanogenic archaeon, Methanococcus jannaschii.</title>
        <authorList>
            <person name="Bult C.J."/>
            <person name="White O."/>
            <person name="Olsen G.J."/>
            <person name="Zhou L."/>
            <person name="Fleischmann R.D."/>
            <person name="Sutton G.G."/>
            <person name="Blake J.A."/>
            <person name="FitzGerald L.M."/>
            <person name="Clayton R.A."/>
            <person name="Gocayne J.D."/>
            <person name="Kerlavage A.R."/>
            <person name="Dougherty B.A."/>
            <person name="Tomb J.-F."/>
            <person name="Adams M.D."/>
            <person name="Reich C.I."/>
            <person name="Overbeek R."/>
            <person name="Kirkness E.F."/>
            <person name="Weinstock K.G."/>
            <person name="Merrick J.M."/>
            <person name="Glodek A."/>
            <person name="Scott J.L."/>
            <person name="Geoghagen N.S.M."/>
            <person name="Weidman J.F."/>
            <person name="Fuhrmann J.L."/>
            <person name="Nguyen D."/>
            <person name="Utterback T.R."/>
            <person name="Kelley J.M."/>
            <person name="Peterson J.D."/>
            <person name="Sadow P.W."/>
            <person name="Hanna M.C."/>
            <person name="Cotton M.D."/>
            <person name="Roberts K.M."/>
            <person name="Hurst M.A."/>
            <person name="Kaine B.P."/>
            <person name="Borodovsky M."/>
            <person name="Klenk H.-P."/>
            <person name="Fraser C.M."/>
            <person name="Smith H.O."/>
            <person name="Woese C.R."/>
            <person name="Venter J.C."/>
        </authorList>
    </citation>
    <scope>NUCLEOTIDE SEQUENCE [LARGE SCALE GENOMIC DNA]</scope>
    <source>
        <strain>ATCC 43067 / DSM 2661 / JAL-1 / JCM 10045 / NBRC 100440</strain>
    </source>
</reference>
<name>Y296_METJA</name>
<evidence type="ECO:0000250" key="1"/>
<evidence type="ECO:0000305" key="2"/>
<protein>
    <recommendedName>
        <fullName>Probable metallo-hydrolase MJ0296</fullName>
        <ecNumber>3.-.-.-</ecNumber>
    </recommendedName>
</protein>
<sequence length="203" mass="23236">MIYISMFKFLFKILIGEIMIKLLYEGILIRENGIIKKASSSSTLIITDNNNIIVDTSTKDMENIIIKGLSELNLSPNDIDVVINTHLHYDHIENNPIFKNATFYASPKEFGFNDNFEDFKKFKDKEIEIIETPGHTYGSISVIYKDYVVVGDASPLKNNILKMIPPKLNVDEKLALESLKKIRKLRKNVITGHEGIVYKEKLL</sequence>
<proteinExistence type="inferred from homology"/>
<keyword id="KW-0378">Hydrolase</keyword>
<keyword id="KW-0479">Metal-binding</keyword>
<keyword id="KW-1185">Reference proteome</keyword>
<keyword id="KW-0862">Zinc</keyword>
<organism>
    <name type="scientific">Methanocaldococcus jannaschii (strain ATCC 43067 / DSM 2661 / JAL-1 / JCM 10045 / NBRC 100440)</name>
    <name type="common">Methanococcus jannaschii</name>
    <dbReference type="NCBI Taxonomy" id="243232"/>
    <lineage>
        <taxon>Archaea</taxon>
        <taxon>Methanobacteriati</taxon>
        <taxon>Methanobacteriota</taxon>
        <taxon>Methanomada group</taxon>
        <taxon>Methanococci</taxon>
        <taxon>Methanococcales</taxon>
        <taxon>Methanocaldococcaceae</taxon>
        <taxon>Methanocaldococcus</taxon>
    </lineage>
</organism>